<feature type="initiator methionine" description="Removed" evidence="5">
    <location>
        <position position="1"/>
    </location>
</feature>
<feature type="chain" id="PRO_5000143279" description="Transposon Ty3-G Gag polyprotein">
    <location>
        <begin position="2"/>
        <end position="290"/>
    </location>
</feature>
<feature type="chain" id="PRO_0000279365" description="Capsid protein">
    <location>
        <begin position="2"/>
        <end position="207"/>
    </location>
</feature>
<feature type="peptide" id="PRO_0000279366" description="Spacer peptide p3">
    <location>
        <begin position="208"/>
        <end position="233"/>
    </location>
</feature>
<feature type="chain" id="PRO_5000143280" description="Nucleocapsid protein p9">
    <location>
        <begin position="234"/>
        <end position="290"/>
    </location>
</feature>
<feature type="zinc finger region" description="CCHC-type" evidence="2">
    <location>
        <begin position="265"/>
        <end position="282"/>
    </location>
</feature>
<feature type="site" description="Cleavage; by Ty3 protease">
    <location>
        <begin position="207"/>
        <end position="208"/>
    </location>
</feature>
<feature type="site" description="Cleavage; by Ty3 protease">
    <location>
        <begin position="233"/>
        <end position="234"/>
    </location>
</feature>
<feature type="modified residue" description="N-acetylserine" evidence="5">
    <location>
        <position position="2"/>
    </location>
</feature>
<feature type="mutagenesis site" description="Reduces level of VLP formation and maturation." evidence="7">
    <original>C</original>
    <variation>S</variation>
    <location>
        <position position="267"/>
    </location>
</feature>
<feature type="mutagenesis site" description="Reduces level of VLP formation and maturation." evidence="7">
    <original>H</original>
    <variation>Q</variation>
    <location>
        <position position="275"/>
    </location>
</feature>
<protein>
    <recommendedName>
        <fullName>Transposon Ty3-G Gag polyprotein</fullName>
    </recommendedName>
    <alternativeName>
        <fullName>Gag3</fullName>
    </alternativeName>
    <alternativeName>
        <fullName>Transposon Ty3-1 protein A</fullName>
        <shortName>TY3A</shortName>
    </alternativeName>
    <component>
        <recommendedName>
            <fullName>Capsid protein</fullName>
            <shortName>CA</shortName>
        </recommendedName>
        <alternativeName>
            <fullName>p24</fullName>
        </alternativeName>
    </component>
    <component>
        <recommendedName>
            <fullName>Spacer peptide p3</fullName>
        </recommendedName>
    </component>
    <component>
        <recommendedName>
            <fullName>Nucleocapsid protein p9</fullName>
            <shortName>NC</shortName>
            <shortName>NCp9</shortName>
        </recommendedName>
        <alternativeName>
            <fullName>p7</fullName>
        </alternativeName>
    </component>
</protein>
<comment type="function">
    <text>Capsid protein (CA) is the structural component of the virus-like particle (VLP), forming the shell that encapsulates the retrotransposons dimeric RNA genome.</text>
</comment>
<comment type="function">
    <text evidence="1 3 6 7 8">Nucleocapsid protein p9 (NC) forms the nucleocore that coats the retro-elements dimeric RNA. Binds these RNAs through its zinc fingers (By similarity). Promotes primer tRNA(i)-Met annealing to the multipartite primer-binding site (PBS), dimerization of Ty3 RNA and initiation of reverse transcription.</text>
</comment>
<comment type="subcellular location">
    <subcellularLocation>
        <location evidence="4">Cytoplasm</location>
    </subcellularLocation>
</comment>
<comment type="alternative products">
    <event type="ribosomal frameshifting"/>
    <isoform>
        <id>Q12173-1</id>
        <name>Transposon Ty3-G Gag polyprotein</name>
        <sequence type="displayed"/>
    </isoform>
    <isoform>
        <id>Q99315-1</id>
        <name>Transposon Ty3-G Gag-Pol polyprotein</name>
        <sequence type="external"/>
    </isoform>
    <text>The Gag-Pol polyprotein is generated by a +1 ribosomal frameshift.</text>
</comment>
<comment type="domain">
    <text>The N-terminal domain of NC, but not its zinc finger, is required for nucleoprotein complex formation and its chaperone activities.</text>
</comment>
<comment type="miscellaneous">
    <text>Retrotransposons are mobile genetic entities that are able to replicate via an RNA intermediate and a reverse transcription step. In contrast to retroviruses, retrotransposons are non-infectious, lack an envelope and remain intracellular. Ty3 retrotransposons belong to the gypsy-like elements (metaviridae).</text>
</comment>
<comment type="miscellaneous">
    <molecule>Isoform Transposon Ty3-G Gag polyprotein</molecule>
    <text>Produced by conventional translation.</text>
</comment>
<comment type="sequence caution" evidence="9">
    <conflict type="erroneous initiation">
        <sequence resource="EMBL-CDS" id="AAA98434"/>
    </conflict>
</comment>
<reference key="1">
    <citation type="journal article" date="1990" name="J. Virol.">
        <title>Characterization of a transpositionally active Ty3 element and identification of the Ty3 integrase protein.</title>
        <authorList>
            <person name="Hansen L.J."/>
            <person name="Sandmeyer S.B."/>
        </authorList>
    </citation>
    <scope>NUCLEOTIDE SEQUENCE [GENOMIC DNA]</scope>
    <scope>FUNCTION</scope>
    <source>
        <strain>AB950</strain>
    </source>
</reference>
<reference key="2">
    <citation type="journal article" date="1996" name="Yeast">
        <title>The sequence of a 23.4 kb segment on the right arm of chromosome VII from Saccharomyces cerevisiae reveals CLB6, SPT6, RP28A and NUP57 genes, a Ty3 element and 11 new open reading frames.</title>
        <authorList>
            <person name="Hansen M."/>
            <person name="Albers M."/>
            <person name="Backes U."/>
            <person name="Coblenz A."/>
            <person name="Leuther H."/>
            <person name="Neu R."/>
            <person name="Schreer A."/>
            <person name="Schaefer B."/>
            <person name="Zimmermann M."/>
            <person name="Wolf K."/>
        </authorList>
    </citation>
    <scope>NUCLEOTIDE SEQUENCE [GENOMIC DNA]</scope>
</reference>
<reference key="3">
    <citation type="journal article" date="1997" name="Nature">
        <title>The nucleotide sequence of Saccharomyces cerevisiae chromosome VII.</title>
        <authorList>
            <person name="Tettelin H."/>
            <person name="Agostoni-Carbone M.L."/>
            <person name="Albermann K."/>
            <person name="Albers M."/>
            <person name="Arroyo J."/>
            <person name="Backes U."/>
            <person name="Barreiros T."/>
            <person name="Bertani I."/>
            <person name="Bjourson A.J."/>
            <person name="Brueckner M."/>
            <person name="Bruschi C.V."/>
            <person name="Carignani G."/>
            <person name="Castagnoli L."/>
            <person name="Cerdan E."/>
            <person name="Clemente M.L."/>
            <person name="Coblenz A."/>
            <person name="Coglievina M."/>
            <person name="Coissac E."/>
            <person name="Defoor E."/>
            <person name="Del Bino S."/>
            <person name="Delius H."/>
            <person name="Delneri D."/>
            <person name="de Wergifosse P."/>
            <person name="Dujon B."/>
            <person name="Durand P."/>
            <person name="Entian K.-D."/>
            <person name="Eraso P."/>
            <person name="Escribano V."/>
            <person name="Fabiani L."/>
            <person name="Fartmann B."/>
            <person name="Feroli F."/>
            <person name="Feuermann M."/>
            <person name="Frontali L."/>
            <person name="Garcia-Gonzalez M."/>
            <person name="Garcia-Saez M.I."/>
            <person name="Goffeau A."/>
            <person name="Guerreiro P."/>
            <person name="Hani J."/>
            <person name="Hansen M."/>
            <person name="Hebling U."/>
            <person name="Hernandez K."/>
            <person name="Heumann K."/>
            <person name="Hilger F."/>
            <person name="Hofmann B."/>
            <person name="Indge K.J."/>
            <person name="James C.M."/>
            <person name="Klima R."/>
            <person name="Koetter P."/>
            <person name="Kramer B."/>
            <person name="Kramer W."/>
            <person name="Lauquin G."/>
            <person name="Leuther H."/>
            <person name="Louis E.J."/>
            <person name="Maillier E."/>
            <person name="Marconi A."/>
            <person name="Martegani E."/>
            <person name="Mazon M.J."/>
            <person name="Mazzoni C."/>
            <person name="McReynolds A.D.K."/>
            <person name="Melchioretto P."/>
            <person name="Mewes H.-W."/>
            <person name="Minenkova O."/>
            <person name="Mueller-Auer S."/>
            <person name="Nawrocki A."/>
            <person name="Netter P."/>
            <person name="Neu R."/>
            <person name="Nombela C."/>
            <person name="Oliver S.G."/>
            <person name="Panzeri L."/>
            <person name="Paoluzi S."/>
            <person name="Plevani P."/>
            <person name="Portetelle D."/>
            <person name="Portillo F."/>
            <person name="Potier S."/>
            <person name="Purnelle B."/>
            <person name="Rieger M."/>
            <person name="Riles L."/>
            <person name="Rinaldi T."/>
            <person name="Robben J."/>
            <person name="Rodrigues-Pousada C."/>
            <person name="Rodriguez-Belmonte E."/>
            <person name="Rodriguez-Torres A.M."/>
            <person name="Rose M."/>
            <person name="Ruzzi M."/>
            <person name="Saliola M."/>
            <person name="Sanchez-Perez M."/>
            <person name="Schaefer B."/>
            <person name="Schaefer M."/>
            <person name="Scharfe M."/>
            <person name="Schmidheini T."/>
            <person name="Schreer A."/>
            <person name="Skala J."/>
            <person name="Souciet J.-L."/>
            <person name="Steensma H.Y."/>
            <person name="Talla E."/>
            <person name="Thierry A."/>
            <person name="Vandenbol M."/>
            <person name="van der Aart Q.J.M."/>
            <person name="Van Dyck L."/>
            <person name="Vanoni M."/>
            <person name="Verhasselt P."/>
            <person name="Voet M."/>
            <person name="Volckaert G."/>
            <person name="Wambutt R."/>
            <person name="Watson M.D."/>
            <person name="Weber N."/>
            <person name="Wedler E."/>
            <person name="Wedler H."/>
            <person name="Wipfli P."/>
            <person name="Wolf K."/>
            <person name="Wright L.F."/>
            <person name="Zaccaria P."/>
            <person name="Zimmermann M."/>
            <person name="Zollner A."/>
            <person name="Kleine K."/>
        </authorList>
    </citation>
    <scope>NUCLEOTIDE SEQUENCE [LARGE SCALE GENOMIC DNA]</scope>
    <source>
        <strain>ATCC 204508 / S288c</strain>
    </source>
</reference>
<reference key="4">
    <citation type="journal article" date="2014" name="G3 (Bethesda)">
        <title>The reference genome sequence of Saccharomyces cerevisiae: Then and now.</title>
        <authorList>
            <person name="Engel S.R."/>
            <person name="Dietrich F.S."/>
            <person name="Fisk D.G."/>
            <person name="Binkley G."/>
            <person name="Balakrishnan R."/>
            <person name="Costanzo M.C."/>
            <person name="Dwight S.S."/>
            <person name="Hitz B.C."/>
            <person name="Karra K."/>
            <person name="Nash R.S."/>
            <person name="Weng S."/>
            <person name="Wong E.D."/>
            <person name="Lloyd P."/>
            <person name="Skrzypek M.S."/>
            <person name="Miyasato S.R."/>
            <person name="Simison M."/>
            <person name="Cherry J.M."/>
        </authorList>
    </citation>
    <scope>GENOME REANNOTATION</scope>
    <source>
        <strain>ATCC 204508 / S288c</strain>
    </source>
</reference>
<reference key="5">
    <citation type="journal article" date="2007" name="Genome Res.">
        <title>Approaching a complete repository of sequence-verified protein-encoding clones for Saccharomyces cerevisiae.</title>
        <authorList>
            <person name="Hu Y."/>
            <person name="Rolfs A."/>
            <person name="Bhullar B."/>
            <person name="Murthy T.V.S."/>
            <person name="Zhu C."/>
            <person name="Berger M.F."/>
            <person name="Camargo A.A."/>
            <person name="Kelley F."/>
            <person name="McCarron S."/>
            <person name="Jepson D."/>
            <person name="Richardson A."/>
            <person name="Raphael J."/>
            <person name="Moreira D."/>
            <person name="Taycher E."/>
            <person name="Zuo D."/>
            <person name="Mohr S."/>
            <person name="Kane M.F."/>
            <person name="Williamson J."/>
            <person name="Simpson A.J.G."/>
            <person name="Bulyk M.L."/>
            <person name="Harlow E."/>
            <person name="Marsischky G."/>
            <person name="Kolodner R.D."/>
            <person name="LaBaer J."/>
        </authorList>
    </citation>
    <scope>NUCLEOTIDE SEQUENCE [GENOMIC DNA]</scope>
    <source>
        <strain>ATCC 204508 / S288c</strain>
    </source>
</reference>
<reference key="6">
    <citation type="journal article" date="1988" name="J. Biol. Chem.">
        <title>A yeast sigma composite element, TY3, has properties of a retrotransposon.</title>
        <authorList>
            <person name="Clark D.J."/>
            <person name="Bilanchone V.W."/>
            <person name="Haywood L.J."/>
            <person name="Dildine S.L."/>
            <person name="Sandmeyer S.B."/>
        </authorList>
    </citation>
    <scope>NUCLEOTIDE SEQUENCE [GENOMIC DNA] OF 1-22</scope>
</reference>
<reference key="7">
    <citation type="journal article" date="1992" name="J. Virol.">
        <title>Ty3 GAG3 and POL3 genes encode the components of intracellular particles.</title>
        <authorList>
            <person name="Hansen L.J."/>
            <person name="Chalker D.L."/>
            <person name="Orlinsky K.J."/>
            <person name="Sandmeyer S.B."/>
        </authorList>
    </citation>
    <scope>SUBCELLULAR LOCATION</scope>
</reference>
<reference key="8">
    <citation type="journal article" date="1993" name="J. Virol.">
        <title>Proteolytic processing of Ty3 proteins is required for transposition.</title>
        <authorList>
            <person name="Kirchner J."/>
            <person name="Sandmeyer S.B."/>
        </authorList>
    </citation>
    <scope>PROTEOLYTIC PROCESSING</scope>
    <scope>CLEAVAGE SITES</scope>
</reference>
<reference key="9">
    <citation type="journal article" date="1994" name="J. Virol.">
        <title>The Cys-His motif of Ty3 NC can be contributed by Gag3 or Gag3-Pol3 polyproteins.</title>
        <authorList>
            <person name="Orlinsky K.J."/>
            <person name="Sandmeyer S.B."/>
        </authorList>
    </citation>
    <scope>FUNCTION OF NUCLEOCAPSID</scope>
    <scope>MUTAGENESIS OF CYS-267 AND HIS-275</scope>
</reference>
<reference key="10">
    <citation type="journal article" date="1998" name="EMBO J.">
        <title>The yeast Ty3 retrotransposon contains a 5'-3' bipartite primer-binding site and encodes nucleocapsid protein NCp9 functionally homologous to HIV-1 NCp7.</title>
        <authorList>
            <person name="Gabus C."/>
            <person name="Ficheux D."/>
            <person name="Rau M."/>
            <person name="Keith G."/>
            <person name="Sandmeyer S.B."/>
            <person name="Darlix J.-L."/>
        </authorList>
    </citation>
    <scope>FUNCTION</scope>
</reference>
<reference key="11">
    <citation type="journal article" date="1998" name="Genome Res.">
        <title>Transposable elements and genome organization: a comprehensive survey of retrotransposons revealed by the complete Saccharomyces cerevisiae genome sequence.</title>
        <authorList>
            <person name="Kim J.M."/>
            <person name="Vanguri S."/>
            <person name="Boeke J.D."/>
            <person name="Gabriel A."/>
            <person name="Voytas D.F."/>
        </authorList>
    </citation>
    <scope>NOMENCLATURE</scope>
</reference>
<reference key="12">
    <citation type="journal article" date="1999" name="J. Biol. Chem.">
        <title>Characterization of active reverse transcriptase and nucleoprotein complexes of the yeast retrotransposon Ty3 in vitro.</title>
        <authorList>
            <person name="Cristofari G."/>
            <person name="Gabus C."/>
            <person name="Ficheux D."/>
            <person name="Bona M."/>
            <person name="Le Grice S.F.J."/>
            <person name="Darlix J.-L."/>
        </authorList>
    </citation>
    <scope>FUNCTION</scope>
</reference>
<reference key="13">
    <citation type="journal article" date="2005" name="Cytogenet. Genome Res.">
        <title>Happy together: the life and times of Ty retrotransposons and their hosts.</title>
        <authorList>
            <person name="Lesage P."/>
            <person name="Todeschini A.L."/>
        </authorList>
    </citation>
    <scope>REVIEW</scope>
</reference>
<reference key="14">
    <citation type="journal article" date="2005" name="J. Virol.">
        <title>Investigation by atomic force microscopy of the structure of Ty3 retrotransposon particles.</title>
        <authorList>
            <person name="Kuznetsov Y.G."/>
            <person name="Zhang M."/>
            <person name="Menees T.M."/>
            <person name="McPherson A."/>
            <person name="Sandmeyer S.B."/>
        </authorList>
    </citation>
    <scope>CLEAVAGE OF INITIATOR METHIONINE</scope>
    <scope>ACETYLATION AT SER-2</scope>
    <scope>CLEAVAGE SITE GLY-207-208-ALA</scope>
    <scope>IDENTIFICATION BY MASS SPECTROMETRY</scope>
</reference>
<proteinExistence type="evidence at protein level"/>
<dbReference type="EMBL" id="M34549">
    <property type="protein sequence ID" value="AAA98434.2"/>
    <property type="status" value="ALT_INIT"/>
    <property type="molecule type" value="Genomic_DNA"/>
</dbReference>
<dbReference type="EMBL" id="Z72894">
    <property type="protein sequence ID" value="CAA97114.1"/>
    <property type="molecule type" value="Genomic_DNA"/>
</dbReference>
<dbReference type="EMBL" id="Z72895">
    <property type="protein sequence ID" value="CAA97116.1"/>
    <property type="molecule type" value="Genomic_DNA"/>
</dbReference>
<dbReference type="EMBL" id="AY557824">
    <property type="protein sequence ID" value="AAS56150.1"/>
    <property type="molecule type" value="Genomic_DNA"/>
</dbReference>
<dbReference type="EMBL" id="AH003104">
    <property type="protein sequence ID" value="AAA66936.1"/>
    <property type="molecule type" value="Genomic_DNA"/>
</dbReference>
<dbReference type="EMBL" id="BK006941">
    <property type="protein sequence ID" value="DAA08203.1"/>
    <property type="molecule type" value="Genomic_DNA"/>
</dbReference>
<dbReference type="PIR" id="S22875">
    <property type="entry name" value="S22875"/>
</dbReference>
<dbReference type="PIR" id="S69841">
    <property type="entry name" value="S69841"/>
</dbReference>
<dbReference type="RefSeq" id="NP_058162.3">
    <molecule id="Q12173-1"/>
    <property type="nucleotide sequence ID" value="NM_001184380.3"/>
</dbReference>
<dbReference type="SMR" id="Q12173"/>
<dbReference type="BioGRID" id="33355">
    <property type="interactions" value="4"/>
</dbReference>
<dbReference type="FunCoup" id="Q12173">
    <property type="interactions" value="50"/>
</dbReference>
<dbReference type="iPTMnet" id="Q12173"/>
<dbReference type="PaxDb" id="4932-YGR109W-A"/>
<dbReference type="PeptideAtlas" id="Q12173"/>
<dbReference type="GeneID" id="853005"/>
<dbReference type="KEGG" id="sce:YGR109W-A"/>
<dbReference type="AGR" id="SGD:S000007346"/>
<dbReference type="SGD" id="S000007346">
    <property type="gene designation" value="YGR109W-A"/>
</dbReference>
<dbReference type="VEuPathDB" id="FungiDB:YGR109W-A"/>
<dbReference type="eggNOG" id="KOG0017">
    <property type="taxonomic scope" value="Eukaryota"/>
</dbReference>
<dbReference type="HOGENOM" id="CLU_966938_0_0_1"/>
<dbReference type="InParanoid" id="Q12173"/>
<dbReference type="OrthoDB" id="4488294at2759"/>
<dbReference type="BioGRID-ORCS" id="853005">
    <property type="hits" value="1 hit in 10 CRISPR screens"/>
</dbReference>
<dbReference type="Proteomes" id="UP000002311">
    <property type="component" value="Chromosome VII"/>
</dbReference>
<dbReference type="RNAct" id="Q12173">
    <property type="molecule type" value="protein"/>
</dbReference>
<dbReference type="GO" id="GO:0005737">
    <property type="term" value="C:cytoplasm"/>
    <property type="evidence" value="ECO:0007669"/>
    <property type="project" value="UniProtKB-SubCell"/>
</dbReference>
<dbReference type="GO" id="GO:0000943">
    <property type="term" value="C:retrotransposon nucleocapsid"/>
    <property type="evidence" value="ECO:0000314"/>
    <property type="project" value="SGD"/>
</dbReference>
<dbReference type="GO" id="GO:0003677">
    <property type="term" value="F:DNA binding"/>
    <property type="evidence" value="ECO:0000314"/>
    <property type="project" value="SGD"/>
</dbReference>
<dbReference type="GO" id="GO:0008270">
    <property type="term" value="F:zinc ion binding"/>
    <property type="evidence" value="ECO:0007669"/>
    <property type="project" value="UniProtKB-KW"/>
</dbReference>
<dbReference type="GO" id="GO:0032197">
    <property type="term" value="P:retrotransposition"/>
    <property type="evidence" value="ECO:0000315"/>
    <property type="project" value="SGD"/>
</dbReference>
<dbReference type="GO" id="GO:0075523">
    <property type="term" value="P:viral translational frameshifting"/>
    <property type="evidence" value="ECO:0007669"/>
    <property type="project" value="UniProtKB-KW"/>
</dbReference>
<dbReference type="InterPro" id="IPR045358">
    <property type="entry name" value="Ty3_capsid"/>
</dbReference>
<dbReference type="InterPro" id="IPR001878">
    <property type="entry name" value="Znf_CCHC"/>
</dbReference>
<dbReference type="InterPro" id="IPR036875">
    <property type="entry name" value="Znf_CCHC_sf"/>
</dbReference>
<dbReference type="Pfam" id="PF19259">
    <property type="entry name" value="Ty3_capsid"/>
    <property type="match status" value="1"/>
</dbReference>
<dbReference type="SMART" id="SM00343">
    <property type="entry name" value="ZnF_C2HC"/>
    <property type="match status" value="1"/>
</dbReference>
<dbReference type="SUPFAM" id="SSF57756">
    <property type="entry name" value="Retrovirus zinc finger-like domains"/>
    <property type="match status" value="1"/>
</dbReference>
<dbReference type="PROSITE" id="PS50158">
    <property type="entry name" value="ZF_CCHC"/>
    <property type="match status" value="1"/>
</dbReference>
<evidence type="ECO:0000250" key="1"/>
<evidence type="ECO:0000255" key="2">
    <source>
        <dbReference type="PROSITE-ProRule" id="PRU00047"/>
    </source>
</evidence>
<evidence type="ECO:0000269" key="3">
    <source>
    </source>
</evidence>
<evidence type="ECO:0000269" key="4">
    <source>
    </source>
</evidence>
<evidence type="ECO:0000269" key="5">
    <source>
    </source>
</evidence>
<evidence type="ECO:0000269" key="6">
    <source>
    </source>
</evidence>
<evidence type="ECO:0000269" key="7">
    <source>
    </source>
</evidence>
<evidence type="ECO:0000269" key="8">
    <source>
    </source>
</evidence>
<evidence type="ECO:0000305" key="9"/>
<keyword id="KW-0007">Acetylation</keyword>
<keyword id="KW-0963">Cytoplasm</keyword>
<keyword id="KW-0479">Metal-binding</keyword>
<keyword id="KW-1185">Reference proteome</keyword>
<keyword id="KW-0688">Ribosomal frameshifting</keyword>
<keyword id="KW-0814">Transposable element</keyword>
<keyword id="KW-0862">Zinc</keyword>
<keyword id="KW-0863">Zinc-finger</keyword>
<sequence length="290" mass="34027">MSFMDQIPGGGNYPKLPVECLPNFPIQPSLTFRGRNDSHKLKNFISEIMLNMSMISWPNDASRIVYCRRHLLNPAAQWANDFVQEQGILEITFDTFIQGLYQHFYKPPDINKIFNAITQLSEAKLGIERLNQRFRKIWDRMPPDFMTEKAAIMTYTRLLTKETYNIVRMHKPETLKDAMEEAYQTTALTERFFPGFELDADGDTIIGATTHLQEEYDSDYDSEDNLTQNGYVHTVRTRRSYNKPMSNHRNRRNNNPSREECIKNRLCFYCKKEGHRLNECRARKASSNRS</sequence>
<organism>
    <name type="scientific">Saccharomyces cerevisiae (strain ATCC 204508 / S288c)</name>
    <name type="common">Baker's yeast</name>
    <dbReference type="NCBI Taxonomy" id="559292"/>
    <lineage>
        <taxon>Eukaryota</taxon>
        <taxon>Fungi</taxon>
        <taxon>Dikarya</taxon>
        <taxon>Ascomycota</taxon>
        <taxon>Saccharomycotina</taxon>
        <taxon>Saccharomycetes</taxon>
        <taxon>Saccharomycetales</taxon>
        <taxon>Saccharomycetaceae</taxon>
        <taxon>Saccharomyces</taxon>
    </lineage>
</organism>
<accession>Q12173</accession>
<accession>D6VUP2</accession>
<accession>Q07096</accession>
<accession>Q9P311</accession>
<gene>
    <name type="primary">TY3A-G</name>
    <name type="synonym">YGRWTy3-1 GAG</name>
    <name type="ordered locus">YGR109W-A</name>
    <name type="ORF">G5982</name>
</gene>
<name>YG31A_YEAST</name>